<name>KAX39_BUTOC</name>
<organism>
    <name type="scientific">Buthus occitanus tunetanus</name>
    <name type="common">Common European scorpion</name>
    <name type="synonym">Buthus tunetanus</name>
    <dbReference type="NCBI Taxonomy" id="6871"/>
    <lineage>
        <taxon>Eukaryota</taxon>
        <taxon>Metazoa</taxon>
        <taxon>Ecdysozoa</taxon>
        <taxon>Arthropoda</taxon>
        <taxon>Chelicerata</taxon>
        <taxon>Arachnida</taxon>
        <taxon>Scorpiones</taxon>
        <taxon>Buthida</taxon>
        <taxon>Buthoidea</taxon>
        <taxon>Buthidae</taxon>
        <taxon>Buthus</taxon>
    </lineage>
</organism>
<proteinExistence type="evidence at protein level"/>
<feature type="peptide" id="PRO_0000044897" description="Potassium channel toxin alpha-KTx 3.9">
    <location>
        <begin position="1"/>
        <end position="37"/>
    </location>
</feature>
<feature type="region of interest" description="Interaction with Ca(2+)-activated K(+) channels" evidence="2">
    <location>
        <begin position="25"/>
        <end position="32"/>
    </location>
</feature>
<feature type="disulfide bond" evidence="1">
    <location>
        <begin position="7"/>
        <end position="27"/>
    </location>
</feature>
<feature type="disulfide bond" evidence="1">
    <location>
        <begin position="13"/>
        <end position="32"/>
    </location>
</feature>
<feature type="disulfide bond" evidence="1">
    <location>
        <begin position="17"/>
        <end position="34"/>
    </location>
</feature>
<comment type="function">
    <text>Binds and inhibits potassium channels. Intracerebroventricular injection into mice induces paralyzing symptoms followed by death. Its binding affinity to rat brain synaptosomes is 5-fold lower than this of KTX 1.</text>
</comment>
<comment type="subcellular location">
    <subcellularLocation>
        <location>Secreted</location>
    </subcellularLocation>
</comment>
<comment type="tissue specificity">
    <text>Expressed by the venom gland.</text>
</comment>
<comment type="domain">
    <text evidence="4">Has the structural arrangement of an alpha-helix connected to antiparallel beta-sheets by disulfide bonds (CS-alpha/beta).</text>
</comment>
<comment type="mass spectrometry"/>
<comment type="toxic dose">
    <text evidence="3">LD(50) is 5.5 ug/kg by intracerebroventricular injection.</text>
</comment>
<comment type="similarity">
    <text evidence="4">Belongs to the short scorpion toxin superfamily. Potassium channel inhibitor family. Alpha-KTx 03 subfamily.</text>
</comment>
<reference key="1">
    <citation type="journal article" date="2000" name="Toxicon">
        <title>KTX3, the kaliotoxin from Buthus occitanus tunetanus scorpion venom: one of an extensive family of peptidyl ligands of potassium channels.</title>
        <authorList>
            <person name="Meki A."/>
            <person name="Mansuelle P."/>
            <person name="Laraba-Djebari F."/>
            <person name="Oughideni R."/>
            <person name="Rochat H."/>
            <person name="Martin-Eauclaire M.-F."/>
        </authorList>
    </citation>
    <scope>PROTEIN SEQUENCE</scope>
    <scope>TOXIC DOSE</scope>
    <scope>MASS SPECTROMETRY</scope>
    <source>
        <tissue>Venom</tissue>
    </source>
</reference>
<accession>P59290</accession>
<gene>
    <name type="primary">KTX3</name>
</gene>
<sequence>VGIPVSCKHSGQCIKPCKDAGMRFGKCMNRKCDCTPK</sequence>
<protein>
    <recommendedName>
        <fullName>Potassium channel toxin alpha-KTx 3.9</fullName>
    </recommendedName>
    <alternativeName>
        <fullName>Kaliotoxin-3</fullName>
        <shortName>KTX-3</shortName>
    </alternativeName>
</protein>
<dbReference type="SMR" id="P59290"/>
<dbReference type="GO" id="GO:0005576">
    <property type="term" value="C:extracellular region"/>
    <property type="evidence" value="ECO:0007669"/>
    <property type="project" value="UniProtKB-SubCell"/>
</dbReference>
<dbReference type="GO" id="GO:0008200">
    <property type="term" value="F:ion channel inhibitor activity"/>
    <property type="evidence" value="ECO:0007669"/>
    <property type="project" value="InterPro"/>
</dbReference>
<dbReference type="GO" id="GO:0015459">
    <property type="term" value="F:potassium channel regulator activity"/>
    <property type="evidence" value="ECO:0007669"/>
    <property type="project" value="UniProtKB-KW"/>
</dbReference>
<dbReference type="GO" id="GO:0090729">
    <property type="term" value="F:toxin activity"/>
    <property type="evidence" value="ECO:0007669"/>
    <property type="project" value="UniProtKB-KW"/>
</dbReference>
<dbReference type="FunFam" id="3.30.30.10:FF:000009">
    <property type="entry name" value="Potassium channel toxin alpha-KTx 4.3"/>
    <property type="match status" value="1"/>
</dbReference>
<dbReference type="Gene3D" id="3.30.30.10">
    <property type="entry name" value="Knottin, scorpion toxin-like"/>
    <property type="match status" value="1"/>
</dbReference>
<dbReference type="InterPro" id="IPR036574">
    <property type="entry name" value="Scorpion_toxin-like_sf"/>
</dbReference>
<dbReference type="InterPro" id="IPR001947">
    <property type="entry name" value="Scorpion_toxinS_K_inh"/>
</dbReference>
<dbReference type="Pfam" id="PF00451">
    <property type="entry name" value="Toxin_2"/>
    <property type="match status" value="1"/>
</dbReference>
<dbReference type="PRINTS" id="PR00286">
    <property type="entry name" value="CHARYBDTOXIN"/>
</dbReference>
<dbReference type="SUPFAM" id="SSF57095">
    <property type="entry name" value="Scorpion toxin-like"/>
    <property type="match status" value="1"/>
</dbReference>
<dbReference type="PROSITE" id="PS01138">
    <property type="entry name" value="SCORP_SHORT_TOXIN"/>
    <property type="match status" value="1"/>
</dbReference>
<keyword id="KW-0903">Direct protein sequencing</keyword>
<keyword id="KW-1015">Disulfide bond</keyword>
<keyword id="KW-0872">Ion channel impairing toxin</keyword>
<keyword id="KW-0528">Neurotoxin</keyword>
<keyword id="KW-0632">Potassium channel impairing toxin</keyword>
<keyword id="KW-0964">Secreted</keyword>
<keyword id="KW-0800">Toxin</keyword>
<evidence type="ECO:0000250" key="1"/>
<evidence type="ECO:0000255" key="2"/>
<evidence type="ECO:0000269" key="3">
    <source>
    </source>
</evidence>
<evidence type="ECO:0000305" key="4"/>